<accession>Q9XGD5</accession>
<feature type="chain" id="PRO_0000165685" description="Caffeoyl-CoA O-methyltransferase 2">
    <location>
        <begin position="1"/>
        <end position="264"/>
    </location>
</feature>
<feature type="region of interest" description="Disordered" evidence="3">
    <location>
        <begin position="1"/>
        <end position="37"/>
    </location>
</feature>
<feature type="compositionally biased region" description="Low complexity" evidence="3">
    <location>
        <begin position="1"/>
        <end position="20"/>
    </location>
</feature>
<feature type="compositionally biased region" description="Basic and acidic residues" evidence="3">
    <location>
        <begin position="28"/>
        <end position="37"/>
    </location>
</feature>
<feature type="binding site" evidence="1">
    <location>
        <position position="38"/>
    </location>
    <ligand>
        <name>substrate</name>
    </ligand>
</feature>
<feature type="binding site" evidence="2">
    <location>
        <position position="80"/>
    </location>
    <ligand>
        <name>S-adenosyl-L-methionine</name>
        <dbReference type="ChEBI" id="CHEBI:59789"/>
    </ligand>
</feature>
<feature type="binding site" evidence="2">
    <location>
        <position position="102"/>
    </location>
    <ligand>
        <name>S-adenosyl-L-methionine</name>
        <dbReference type="ChEBI" id="CHEBI:59789"/>
    </ligand>
</feature>
<feature type="binding site" evidence="2">
    <location>
        <begin position="104"/>
        <end position="105"/>
    </location>
    <ligand>
        <name>S-adenosyl-L-methionine</name>
        <dbReference type="ChEBI" id="CHEBI:59789"/>
    </ligand>
</feature>
<feature type="binding site" evidence="2">
    <location>
        <position position="110"/>
    </location>
    <ligand>
        <name>S-adenosyl-L-methionine</name>
        <dbReference type="ChEBI" id="CHEBI:59789"/>
    </ligand>
</feature>
<feature type="binding site" evidence="2">
    <location>
        <position position="128"/>
    </location>
    <ligand>
        <name>S-adenosyl-L-methionine</name>
        <dbReference type="ChEBI" id="CHEBI:59789"/>
    </ligand>
</feature>
<feature type="binding site" evidence="2">
    <location>
        <position position="157"/>
    </location>
    <ligand>
        <name>S-adenosyl-L-methionine</name>
        <dbReference type="ChEBI" id="CHEBI:59789"/>
    </ligand>
</feature>
<feature type="binding site" evidence="2">
    <location>
        <position position="180"/>
    </location>
    <ligand>
        <name>a divalent metal cation</name>
        <dbReference type="ChEBI" id="CHEBI:60240"/>
    </ligand>
</feature>
<feature type="binding site" evidence="1">
    <location>
        <position position="180"/>
    </location>
    <ligand>
        <name>substrate</name>
    </ligand>
</feature>
<feature type="binding site" evidence="2">
    <location>
        <position position="182"/>
    </location>
    <ligand>
        <name>S-adenosyl-L-methionine</name>
        <dbReference type="ChEBI" id="CHEBI:59789"/>
    </ligand>
</feature>
<feature type="binding site" evidence="2">
    <location>
        <position position="206"/>
    </location>
    <ligand>
        <name>a divalent metal cation</name>
        <dbReference type="ChEBI" id="CHEBI:60240"/>
    </ligand>
</feature>
<feature type="binding site" evidence="2">
    <location>
        <position position="207"/>
    </location>
    <ligand>
        <name>a divalent metal cation</name>
        <dbReference type="ChEBI" id="CHEBI:60240"/>
    </ligand>
</feature>
<feature type="binding site" evidence="1">
    <location>
        <position position="211"/>
    </location>
    <ligand>
        <name>substrate</name>
    </ligand>
</feature>
<proteinExistence type="evidence at transcript level"/>
<evidence type="ECO:0000250" key="1">
    <source>
        <dbReference type="UniProtKB" id="Q40313"/>
    </source>
</evidence>
<evidence type="ECO:0000255" key="2">
    <source>
        <dbReference type="PROSITE-ProRule" id="PRU01019"/>
    </source>
</evidence>
<evidence type="ECO:0000256" key="3">
    <source>
        <dbReference type="SAM" id="MobiDB-lite"/>
    </source>
</evidence>
<reference key="1">
    <citation type="online journal article" date="1999" name="Plant Gene Register">
        <title>Nucleotide sequence of two cDNAs coding for caffeoyl-coenzyme A O-methyltransferase (CCoAOMT) and study of their expression in Zea mays.</title>
        <authorList>
            <person name="Civardi L."/>
            <person name="Rigau J."/>
            <person name="Puigdomenech P."/>
        </authorList>
        <locator>PGR99-113</locator>
    </citation>
    <scope>NUCLEOTIDE SEQUENCE [MRNA]</scope>
    <source>
        <strain>cv. Wisconsin 64A</strain>
    </source>
</reference>
<gene>
    <name type="primary">CCOAOMT2</name>
</gene>
<comment type="function">
    <text>Methylates caffeoyl-CoA to feruloyl-CoA and 5-hydroxyferuloyl-CoA to sinapoyl-CoA. Plays a role in the synthesis of feruloylated polysaccharides. Involved in the reinforcement of the plant cell wall. Also involved in the responding to wounding or pathogen challenge by the increased formation of cell wall-bound ferulic acid polymers.</text>
</comment>
<comment type="catalytic activity">
    <reaction>
        <text>(E)-caffeoyl-CoA + S-adenosyl-L-methionine = (E)-feruloyl-CoA + S-adenosyl-L-homocysteine + H(+)</text>
        <dbReference type="Rhea" id="RHEA:16925"/>
        <dbReference type="ChEBI" id="CHEBI:15378"/>
        <dbReference type="ChEBI" id="CHEBI:57856"/>
        <dbReference type="ChEBI" id="CHEBI:59789"/>
        <dbReference type="ChEBI" id="CHEBI:87136"/>
        <dbReference type="ChEBI" id="CHEBI:87305"/>
        <dbReference type="EC" id="2.1.1.104"/>
    </reaction>
</comment>
<comment type="cofactor">
    <cofactor evidence="1">
        <name>a divalent metal cation</name>
        <dbReference type="ChEBI" id="CHEBI:60240"/>
    </cofactor>
    <text evidence="1">Binds 1 divalent metal cation per subunit.</text>
</comment>
<comment type="pathway">
    <text>Aromatic compound metabolism; phenylpropanoid biosynthesis.</text>
</comment>
<comment type="similarity">
    <text evidence="2">Belongs to the class I-like SAM-binding methyltransferase superfamily. Cation-dependent O-methyltransferase family. CCoAMT subfamily.</text>
</comment>
<organism>
    <name type="scientific">Zea mays</name>
    <name type="common">Maize</name>
    <dbReference type="NCBI Taxonomy" id="4577"/>
    <lineage>
        <taxon>Eukaryota</taxon>
        <taxon>Viridiplantae</taxon>
        <taxon>Streptophyta</taxon>
        <taxon>Embryophyta</taxon>
        <taxon>Tracheophyta</taxon>
        <taxon>Spermatophyta</taxon>
        <taxon>Magnoliopsida</taxon>
        <taxon>Liliopsida</taxon>
        <taxon>Poales</taxon>
        <taxon>Poaceae</taxon>
        <taxon>PACMAD clade</taxon>
        <taxon>Panicoideae</taxon>
        <taxon>Andropogonodae</taxon>
        <taxon>Andropogoneae</taxon>
        <taxon>Tripsacinae</taxon>
        <taxon>Zea</taxon>
    </lineage>
</organism>
<name>CAMT2_MAIZE</name>
<keyword id="KW-0438">Lignin biosynthesis</keyword>
<keyword id="KW-0479">Metal-binding</keyword>
<keyword id="KW-0489">Methyltransferase</keyword>
<keyword id="KW-1185">Reference proteome</keyword>
<keyword id="KW-0949">S-adenosyl-L-methionine</keyword>
<keyword id="KW-0808">Transferase</keyword>
<dbReference type="EC" id="2.1.1.104"/>
<dbReference type="EMBL" id="AJ242981">
    <property type="protein sequence ID" value="CAB45150.1"/>
    <property type="molecule type" value="mRNA"/>
</dbReference>
<dbReference type="SMR" id="Q9XGD5"/>
<dbReference type="FunCoup" id="Q9XGD5">
    <property type="interactions" value="1115"/>
</dbReference>
<dbReference type="STRING" id="4577.Q9XGD5"/>
<dbReference type="InParanoid" id="Q9XGD5"/>
<dbReference type="BRENDA" id="2.1.1.104">
    <property type="organism ID" value="6752"/>
</dbReference>
<dbReference type="UniPathway" id="UPA00711"/>
<dbReference type="Proteomes" id="UP000007305">
    <property type="component" value="Unplaced"/>
</dbReference>
<dbReference type="ExpressionAtlas" id="Q9XGD5">
    <property type="expression patterns" value="baseline and differential"/>
</dbReference>
<dbReference type="GO" id="GO:0042409">
    <property type="term" value="F:caffeoyl-CoA O-methyltransferase activity"/>
    <property type="evidence" value="ECO:0007669"/>
    <property type="project" value="UniProtKB-EC"/>
</dbReference>
<dbReference type="GO" id="GO:0046872">
    <property type="term" value="F:metal ion binding"/>
    <property type="evidence" value="ECO:0007669"/>
    <property type="project" value="UniProtKB-KW"/>
</dbReference>
<dbReference type="GO" id="GO:0008757">
    <property type="term" value="F:S-adenosylmethionine-dependent methyltransferase activity"/>
    <property type="evidence" value="ECO:0000318"/>
    <property type="project" value="GO_Central"/>
</dbReference>
<dbReference type="GO" id="GO:0009809">
    <property type="term" value="P:lignin biosynthetic process"/>
    <property type="evidence" value="ECO:0007669"/>
    <property type="project" value="UniProtKB-KW"/>
</dbReference>
<dbReference type="GO" id="GO:0032259">
    <property type="term" value="P:methylation"/>
    <property type="evidence" value="ECO:0007669"/>
    <property type="project" value="UniProtKB-KW"/>
</dbReference>
<dbReference type="FunFam" id="3.40.50.150:FF:000147">
    <property type="entry name" value="Caffeoyl-CoA O-methyltransferase 1"/>
    <property type="match status" value="1"/>
</dbReference>
<dbReference type="Gene3D" id="3.40.50.150">
    <property type="entry name" value="Vaccinia Virus protein VP39"/>
    <property type="match status" value="1"/>
</dbReference>
<dbReference type="InterPro" id="IPR050362">
    <property type="entry name" value="Cation-dep_OMT"/>
</dbReference>
<dbReference type="InterPro" id="IPR029063">
    <property type="entry name" value="SAM-dependent_MTases_sf"/>
</dbReference>
<dbReference type="InterPro" id="IPR002935">
    <property type="entry name" value="SAM_O-MeTrfase"/>
</dbReference>
<dbReference type="PANTHER" id="PTHR10509:SF81">
    <property type="entry name" value="CAFFEOYL-COA O-METHYLTRANSFERASE 1"/>
    <property type="match status" value="1"/>
</dbReference>
<dbReference type="PANTHER" id="PTHR10509">
    <property type="entry name" value="O-METHYLTRANSFERASE-RELATED"/>
    <property type="match status" value="1"/>
</dbReference>
<dbReference type="Pfam" id="PF01596">
    <property type="entry name" value="Methyltransf_3"/>
    <property type="match status" value="1"/>
</dbReference>
<dbReference type="SUPFAM" id="SSF53335">
    <property type="entry name" value="S-adenosyl-L-methionine-dependent methyltransferases"/>
    <property type="match status" value="1"/>
</dbReference>
<dbReference type="PROSITE" id="PS51682">
    <property type="entry name" value="SAM_OMT_I"/>
    <property type="match status" value="1"/>
</dbReference>
<protein>
    <recommendedName>
        <fullName>Caffeoyl-CoA O-methyltransferase 2</fullName>
        <ecNumber>2.1.1.104</ecNumber>
    </recommendedName>
    <alternativeName>
        <fullName>Trans-caffeoyl-CoA 3-O-methyltransferase 2</fullName>
        <shortName>CCoAMT-2</shortName>
        <shortName>CCoAOMT-2</shortName>
    </alternativeName>
</protein>
<sequence length="264" mass="29351">MATTATEATKTTAPAQEQQANGNGNGEQKTRHSEVGHKSLLKSDDLYQYILDTSVYPREPESMKELREITAKHPWNLMTTSADEGQFLNMLIKLIGAKKTMEIGVYTGYSLLATALALPEDGTILAMDINRENYELGLPCINKAGVGHKIDFREGPALPVLDDLVADKEQHGSFDFAFVDADKDNYLNYHERLLKLVRPGGLIGYDNTLWNGSVVLPDDAPMRKYIRFYRDFVLALNSALAADDRVEICQLPVGDGVTLCRRVK</sequence>